<accession>Q8ZBJ7</accession>
<accession>Q0WBN4</accession>
<protein>
    <recommendedName>
        <fullName evidence="1">S-adenosylmethionine decarboxylase proenzyme</fullName>
        <shortName evidence="1">AdoMetDC</shortName>
        <shortName evidence="1">SAMDC</shortName>
        <ecNumber evidence="1">4.1.1.50</ecNumber>
    </recommendedName>
    <component>
        <recommendedName>
            <fullName evidence="1">S-adenosylmethionine decarboxylase beta chain</fullName>
        </recommendedName>
    </component>
    <component>
        <recommendedName>
            <fullName evidence="1">S-adenosylmethionine decarboxylase alpha chain</fullName>
        </recommendedName>
    </component>
</protein>
<reference key="1">
    <citation type="journal article" date="2001" name="Nature">
        <title>Genome sequence of Yersinia pestis, the causative agent of plague.</title>
        <authorList>
            <person name="Parkhill J."/>
            <person name="Wren B.W."/>
            <person name="Thomson N.R."/>
            <person name="Titball R.W."/>
            <person name="Holden M.T.G."/>
            <person name="Prentice M.B."/>
            <person name="Sebaihia M."/>
            <person name="James K.D."/>
            <person name="Churcher C.M."/>
            <person name="Mungall K.L."/>
            <person name="Baker S."/>
            <person name="Basham D."/>
            <person name="Bentley S.D."/>
            <person name="Brooks K."/>
            <person name="Cerdeno-Tarraga A.-M."/>
            <person name="Chillingworth T."/>
            <person name="Cronin A."/>
            <person name="Davies R.M."/>
            <person name="Davis P."/>
            <person name="Dougan G."/>
            <person name="Feltwell T."/>
            <person name="Hamlin N."/>
            <person name="Holroyd S."/>
            <person name="Jagels K."/>
            <person name="Karlyshev A.V."/>
            <person name="Leather S."/>
            <person name="Moule S."/>
            <person name="Oyston P.C.F."/>
            <person name="Quail M.A."/>
            <person name="Rutherford K.M."/>
            <person name="Simmonds M."/>
            <person name="Skelton J."/>
            <person name="Stevens K."/>
            <person name="Whitehead S."/>
            <person name="Barrell B.G."/>
        </authorList>
    </citation>
    <scope>NUCLEOTIDE SEQUENCE [LARGE SCALE GENOMIC DNA]</scope>
    <source>
        <strain>CO-92 / Biovar Orientalis</strain>
    </source>
</reference>
<reference key="2">
    <citation type="journal article" date="2002" name="J. Bacteriol.">
        <title>Genome sequence of Yersinia pestis KIM.</title>
        <authorList>
            <person name="Deng W."/>
            <person name="Burland V."/>
            <person name="Plunkett G. III"/>
            <person name="Boutin A."/>
            <person name="Mayhew G.F."/>
            <person name="Liss P."/>
            <person name="Perna N.T."/>
            <person name="Rose D.J."/>
            <person name="Mau B."/>
            <person name="Zhou S."/>
            <person name="Schwartz D.C."/>
            <person name="Fetherston J.D."/>
            <person name="Lindler L.E."/>
            <person name="Brubaker R.R."/>
            <person name="Plano G.V."/>
            <person name="Straley S.C."/>
            <person name="McDonough K.A."/>
            <person name="Nilles M.L."/>
            <person name="Matson J.S."/>
            <person name="Blattner F.R."/>
            <person name="Perry R.D."/>
        </authorList>
    </citation>
    <scope>NUCLEOTIDE SEQUENCE [LARGE SCALE GENOMIC DNA]</scope>
    <source>
        <strain>KIM10+ / Biovar Mediaevalis</strain>
    </source>
</reference>
<reference key="3">
    <citation type="journal article" date="2004" name="DNA Res.">
        <title>Complete genome sequence of Yersinia pestis strain 91001, an isolate avirulent to humans.</title>
        <authorList>
            <person name="Song Y."/>
            <person name="Tong Z."/>
            <person name="Wang J."/>
            <person name="Wang L."/>
            <person name="Guo Z."/>
            <person name="Han Y."/>
            <person name="Zhang J."/>
            <person name="Pei D."/>
            <person name="Zhou D."/>
            <person name="Qin H."/>
            <person name="Pang X."/>
            <person name="Han Y."/>
            <person name="Zhai J."/>
            <person name="Li M."/>
            <person name="Cui B."/>
            <person name="Qi Z."/>
            <person name="Jin L."/>
            <person name="Dai R."/>
            <person name="Chen F."/>
            <person name="Li S."/>
            <person name="Ye C."/>
            <person name="Du Z."/>
            <person name="Lin W."/>
            <person name="Wang J."/>
            <person name="Yu J."/>
            <person name="Yang H."/>
            <person name="Wang J."/>
            <person name="Huang P."/>
            <person name="Yang R."/>
        </authorList>
    </citation>
    <scope>NUCLEOTIDE SEQUENCE [LARGE SCALE GENOMIC DNA]</scope>
    <source>
        <strain>91001 / Biovar Mediaevalis</strain>
    </source>
</reference>
<evidence type="ECO:0000255" key="1">
    <source>
        <dbReference type="HAMAP-Rule" id="MF_00465"/>
    </source>
</evidence>
<dbReference type="EC" id="4.1.1.50" evidence="1"/>
<dbReference type="EMBL" id="AL590842">
    <property type="protein sequence ID" value="CAL22001.1"/>
    <property type="molecule type" value="Genomic_DNA"/>
</dbReference>
<dbReference type="EMBL" id="AE009952">
    <property type="protein sequence ID" value="AAM84361.1"/>
    <property type="molecule type" value="Genomic_DNA"/>
</dbReference>
<dbReference type="EMBL" id="AE017042">
    <property type="protein sequence ID" value="AAS60549.1"/>
    <property type="molecule type" value="Genomic_DNA"/>
</dbReference>
<dbReference type="PIR" id="AF0414">
    <property type="entry name" value="AF0414"/>
</dbReference>
<dbReference type="RefSeq" id="WP_002209337.1">
    <property type="nucleotide sequence ID" value="NZ_WUCM01000008.1"/>
</dbReference>
<dbReference type="RefSeq" id="YP_002348304.1">
    <property type="nucleotide sequence ID" value="NC_003143.1"/>
</dbReference>
<dbReference type="SMR" id="Q8ZBJ7"/>
<dbReference type="STRING" id="214092.YPO3412"/>
<dbReference type="PaxDb" id="214092-YPO3412"/>
<dbReference type="DNASU" id="1145721"/>
<dbReference type="EnsemblBacteria" id="AAS60549">
    <property type="protein sequence ID" value="AAS60549"/>
    <property type="gene ID" value="YP_0273"/>
</dbReference>
<dbReference type="GeneID" id="57975297"/>
<dbReference type="KEGG" id="ype:YPO3412"/>
<dbReference type="KEGG" id="ypk:y0774"/>
<dbReference type="KEGG" id="ypm:YP_0273"/>
<dbReference type="PATRIC" id="fig|214092.21.peg.3898"/>
<dbReference type="eggNOG" id="COG1586">
    <property type="taxonomic scope" value="Bacteria"/>
</dbReference>
<dbReference type="HOGENOM" id="CLU_092007_0_0_6"/>
<dbReference type="OMA" id="HVTVHTY"/>
<dbReference type="OrthoDB" id="5290709at2"/>
<dbReference type="UniPathway" id="UPA00331">
    <property type="reaction ID" value="UER00451"/>
</dbReference>
<dbReference type="Proteomes" id="UP000000815">
    <property type="component" value="Chromosome"/>
</dbReference>
<dbReference type="Proteomes" id="UP000001019">
    <property type="component" value="Chromosome"/>
</dbReference>
<dbReference type="Proteomes" id="UP000002490">
    <property type="component" value="Chromosome"/>
</dbReference>
<dbReference type="GO" id="GO:0005829">
    <property type="term" value="C:cytosol"/>
    <property type="evidence" value="ECO:0000318"/>
    <property type="project" value="GO_Central"/>
</dbReference>
<dbReference type="GO" id="GO:0004014">
    <property type="term" value="F:adenosylmethionine decarboxylase activity"/>
    <property type="evidence" value="ECO:0000318"/>
    <property type="project" value="GO_Central"/>
</dbReference>
<dbReference type="GO" id="GO:0008295">
    <property type="term" value="P:spermidine biosynthetic process"/>
    <property type="evidence" value="ECO:0000318"/>
    <property type="project" value="GO_Central"/>
</dbReference>
<dbReference type="FunFam" id="3.60.90.10:FF:000001">
    <property type="entry name" value="S-adenosylmethionine decarboxylase proenzyme"/>
    <property type="match status" value="1"/>
</dbReference>
<dbReference type="Gene3D" id="3.60.90.10">
    <property type="entry name" value="S-adenosylmethionine decarboxylase"/>
    <property type="match status" value="1"/>
</dbReference>
<dbReference type="HAMAP" id="MF_00465">
    <property type="entry name" value="AdoMetDC_2"/>
    <property type="match status" value="1"/>
</dbReference>
<dbReference type="InterPro" id="IPR003826">
    <property type="entry name" value="AdoMetDC_fam_prok"/>
</dbReference>
<dbReference type="InterPro" id="IPR009165">
    <property type="entry name" value="S-AdoMet_deCO2ase_bac"/>
</dbReference>
<dbReference type="InterPro" id="IPR016067">
    <property type="entry name" value="S-AdoMet_deCO2ase_core"/>
</dbReference>
<dbReference type="NCBIfam" id="TIGR03331">
    <property type="entry name" value="SAM_DCase_Eco"/>
    <property type="match status" value="1"/>
</dbReference>
<dbReference type="PANTHER" id="PTHR33866">
    <property type="entry name" value="S-ADENOSYLMETHIONINE DECARBOXYLASE PROENZYME"/>
    <property type="match status" value="1"/>
</dbReference>
<dbReference type="PANTHER" id="PTHR33866:SF1">
    <property type="entry name" value="S-ADENOSYLMETHIONINE DECARBOXYLASE PROENZYME"/>
    <property type="match status" value="1"/>
</dbReference>
<dbReference type="Pfam" id="PF02675">
    <property type="entry name" value="AdoMet_dc"/>
    <property type="match status" value="1"/>
</dbReference>
<dbReference type="PIRSF" id="PIRSF001356">
    <property type="entry name" value="SAM_decarboxylas"/>
    <property type="match status" value="1"/>
</dbReference>
<dbReference type="SUPFAM" id="SSF56276">
    <property type="entry name" value="S-adenosylmethionine decarboxylase"/>
    <property type="match status" value="1"/>
</dbReference>
<feature type="chain" id="PRO_0000030075" description="S-adenosylmethionine decarboxylase beta chain" evidence="1">
    <location>
        <begin position="1"/>
        <end position="111"/>
    </location>
</feature>
<feature type="chain" id="PRO_0000030076" description="S-adenosylmethionine decarboxylase alpha chain" evidence="1">
    <location>
        <begin position="112"/>
        <end position="264"/>
    </location>
</feature>
<feature type="active site" description="Schiff-base intermediate with substrate; via pyruvic acid" evidence="1">
    <location>
        <position position="112"/>
    </location>
</feature>
<feature type="active site" description="Proton acceptor; for processing activity" evidence="1">
    <location>
        <position position="117"/>
    </location>
</feature>
<feature type="active site" description="Proton donor; for catalytic activity" evidence="1">
    <location>
        <position position="140"/>
    </location>
</feature>
<feature type="site" description="Cleavage (non-hydrolytic); by autolysis" evidence="1">
    <location>
        <begin position="111"/>
        <end position="112"/>
    </location>
</feature>
<feature type="modified residue" description="Pyruvic acid (Ser); by autocatalysis" evidence="1">
    <location>
        <position position="112"/>
    </location>
</feature>
<keyword id="KW-0068">Autocatalytic cleavage</keyword>
<keyword id="KW-0210">Decarboxylase</keyword>
<keyword id="KW-0456">Lyase</keyword>
<keyword id="KW-0620">Polyamine biosynthesis</keyword>
<keyword id="KW-0670">Pyruvate</keyword>
<keyword id="KW-1185">Reference proteome</keyword>
<keyword id="KW-0949">S-adenosyl-L-methionine</keyword>
<keyword id="KW-0704">Schiff base</keyword>
<keyword id="KW-0745">Spermidine biosynthesis</keyword>
<keyword id="KW-0865">Zymogen</keyword>
<name>SPED_YERPE</name>
<sequence>MSKLKLHGFNNLTKSLSFCIYDICYAKTADDRDGYIAYIDEQYNANRLTEILSETCSIIGANILNIARQDYDPQGASVTILVSEEPVDPRDVDTSEHPGPLPSAVVAHLDKSHICVHTYPESHPEAGLCTFRADIEVSTCGVISPLKALNYLIHQLESDIVTMDYRVRGFTRDINGVKHFIDHKINSIQNFMSDDMKSLYHMMDVNVYQENIFHTKMMLKDFDLKHYLFNAKPEELSAEEKEQITRLLYKEMQEIYYGRNVPEV</sequence>
<organism>
    <name type="scientific">Yersinia pestis</name>
    <dbReference type="NCBI Taxonomy" id="632"/>
    <lineage>
        <taxon>Bacteria</taxon>
        <taxon>Pseudomonadati</taxon>
        <taxon>Pseudomonadota</taxon>
        <taxon>Gammaproteobacteria</taxon>
        <taxon>Enterobacterales</taxon>
        <taxon>Yersiniaceae</taxon>
        <taxon>Yersinia</taxon>
    </lineage>
</organism>
<proteinExistence type="inferred from homology"/>
<comment type="function">
    <text evidence="1">Catalyzes the decarboxylation of S-adenosylmethionine to S-adenosylmethioninamine (dcAdoMet), the propylamine donor required for the synthesis of the polyamines spermine and spermidine from the diamine putrescine.</text>
</comment>
<comment type="catalytic activity">
    <reaction evidence="1">
        <text>S-adenosyl-L-methionine + H(+) = S-adenosyl 3-(methylsulfanyl)propylamine + CO2</text>
        <dbReference type="Rhea" id="RHEA:15981"/>
        <dbReference type="ChEBI" id="CHEBI:15378"/>
        <dbReference type="ChEBI" id="CHEBI:16526"/>
        <dbReference type="ChEBI" id="CHEBI:57443"/>
        <dbReference type="ChEBI" id="CHEBI:59789"/>
        <dbReference type="EC" id="4.1.1.50"/>
    </reaction>
</comment>
<comment type="cofactor">
    <cofactor evidence="1">
        <name>pyruvate</name>
        <dbReference type="ChEBI" id="CHEBI:15361"/>
    </cofactor>
    <text evidence="1">Binds 1 pyruvoyl group covalently per subunit.</text>
</comment>
<comment type="pathway">
    <text evidence="1">Amine and polyamine biosynthesis; S-adenosylmethioninamine biosynthesis; S-adenosylmethioninamine from S-adenosyl-L-methionine: step 1/1.</text>
</comment>
<comment type="subunit">
    <text evidence="1">Heterooctamer of four alpha and four beta chains arranged as a tetramer of alpha/beta heterodimers.</text>
</comment>
<comment type="PTM">
    <text evidence="1">Is synthesized initially as an inactive proenzyme. Formation of the active enzyme involves a self-maturation process in which the active site pyruvoyl group is generated from an internal serine residue via an autocatalytic post-translational modification. Two non-identical subunits are generated from the proenzyme in this reaction, and the pyruvate is formed at the N-terminus of the alpha chain, which is derived from the carboxyl end of the proenzyme. The post-translation cleavage follows an unusual pathway, termed non-hydrolytic serinolysis, in which the side chain hydroxyl group of the serine supplies its oxygen atom to form the C-terminus of the beta chain, while the remainder of the serine residue undergoes an oxidative deamination to produce ammonia and the pyruvoyl group blocking the N-terminus of the alpha chain.</text>
</comment>
<comment type="similarity">
    <text evidence="1">Belongs to the prokaryotic AdoMetDC family. Type 2 subfamily.</text>
</comment>
<gene>
    <name evidence="1" type="primary">speD</name>
    <name type="ordered locus">YPO3412</name>
    <name type="ordered locus">y0774</name>
    <name type="ordered locus">YP_0273</name>
</gene>